<feature type="initiator methionine" description="Removed" evidence="2">
    <location>
        <position position="1"/>
    </location>
</feature>
<feature type="chain" id="PRO_0000441168" description="Protein NDRG2">
    <location>
        <begin position="2"/>
        <end position="371"/>
    </location>
</feature>
<feature type="region of interest" description="Disordered" evidence="3">
    <location>
        <begin position="1"/>
        <end position="22"/>
    </location>
</feature>
<feature type="region of interest" description="Disordered" evidence="3">
    <location>
        <begin position="334"/>
        <end position="371"/>
    </location>
</feature>
<feature type="modified residue" description="N-acetylalanine" evidence="2">
    <location>
        <position position="2"/>
    </location>
</feature>
<feature type="modified residue" description="Phosphothreonine" evidence="2">
    <location>
        <position position="20"/>
    </location>
</feature>
<feature type="modified residue" description="Phosphoserine" evidence="12">
    <location>
        <position position="326"/>
    </location>
</feature>
<feature type="modified residue" description="Phosphoserine" evidence="11 12 13">
    <location>
        <position position="328"/>
    </location>
</feature>
<feature type="modified residue" description="Phosphothreonine; by SGK1" evidence="6 11 12 13">
    <location>
        <position position="330"/>
    </location>
</feature>
<feature type="modified residue" description="Phosphoserine; by PKC/PRKCQ or SGK1" evidence="4 6 11 12 13">
    <location>
        <position position="332"/>
    </location>
</feature>
<feature type="modified residue" description="Phosphothreonine" evidence="11 13">
    <location>
        <position position="334"/>
    </location>
</feature>
<feature type="modified residue" description="Phosphoserine" evidence="11 13">
    <location>
        <position position="335"/>
    </location>
</feature>
<feature type="modified residue" description="Phosphoserine" evidence="11 13">
    <location>
        <position position="338"/>
    </location>
</feature>
<feature type="modified residue" description="Phosphoserine" evidence="13">
    <location>
        <position position="344"/>
    </location>
</feature>
<feature type="modified residue" description="Phosphothreonine; by PKB/AKT1 or SGK1" evidence="4 6 13">
    <location>
        <position position="348"/>
    </location>
</feature>
<feature type="modified residue" description="Phosphoserine" evidence="6 13">
    <location>
        <position position="350"/>
    </location>
</feature>
<feature type="modified residue" description="Phosphoserine" evidence="13">
    <location>
        <position position="352"/>
    </location>
</feature>
<feature type="modified residue" description="Phosphoserine" evidence="13">
    <location>
        <position position="353"/>
    </location>
</feature>
<feature type="modified residue" description="Phosphoserine" evidence="13">
    <location>
        <position position="355"/>
    </location>
</feature>
<feature type="modified residue" description="Phosphothreonine" evidence="11">
    <location>
        <position position="357"/>
    </location>
</feature>
<feature type="modified residue" description="Phosphoserine" evidence="13">
    <location>
        <position position="370"/>
    </location>
</feature>
<feature type="splice variant" id="VSP_019009" description="In isoform 2." evidence="9">
    <location>
        <begin position="26"/>
        <end position="39"/>
    </location>
</feature>
<feature type="sequence conflict" description="In Ref. 2; BAE39998." evidence="10" ref="2">
    <original>L</original>
    <variation>P</variation>
    <location>
        <position position="253"/>
    </location>
</feature>
<feature type="sequence conflict" description="In Ref. 2; BAE39998." evidence="10" ref="2">
    <original>R</original>
    <variation>S</variation>
    <location>
        <position position="347"/>
    </location>
</feature>
<feature type="strand" evidence="14">
    <location>
        <begin position="40"/>
        <end position="45"/>
    </location>
</feature>
<feature type="strand" evidence="14">
    <location>
        <begin position="48"/>
        <end position="56"/>
    </location>
</feature>
<feature type="strand" evidence="14">
    <location>
        <begin position="64"/>
        <end position="68"/>
    </location>
</feature>
<feature type="helix" evidence="14">
    <location>
        <begin position="75"/>
        <end position="83"/>
    </location>
</feature>
<feature type="helix" evidence="14">
    <location>
        <begin position="86"/>
        <end position="92"/>
    </location>
</feature>
<feature type="strand" evidence="14">
    <location>
        <begin position="97"/>
        <end position="101"/>
    </location>
</feature>
<feature type="turn" evidence="14">
    <location>
        <begin position="103"/>
        <end position="105"/>
    </location>
</feature>
<feature type="helix" evidence="14">
    <location>
        <begin position="121"/>
        <end position="126"/>
    </location>
</feature>
<feature type="helix" evidence="14">
    <location>
        <begin position="128"/>
        <end position="135"/>
    </location>
</feature>
<feature type="strand" evidence="14">
    <location>
        <begin position="140"/>
        <end position="145"/>
    </location>
</feature>
<feature type="helix" evidence="14">
    <location>
        <begin position="147"/>
        <end position="158"/>
    </location>
</feature>
<feature type="helix" evidence="14">
    <location>
        <begin position="160"/>
        <end position="162"/>
    </location>
</feature>
<feature type="strand" evidence="14">
    <location>
        <begin position="163"/>
        <end position="170"/>
    </location>
</feature>
<feature type="helix" evidence="14">
    <location>
        <begin position="178"/>
        <end position="188"/>
    </location>
</feature>
<feature type="helix" evidence="14">
    <location>
        <begin position="193"/>
        <end position="201"/>
    </location>
</feature>
<feature type="helix" evidence="14">
    <location>
        <begin position="204"/>
        <end position="208"/>
    </location>
</feature>
<feature type="helix" evidence="14">
    <location>
        <begin position="212"/>
        <end position="222"/>
    </location>
</feature>
<feature type="helix" evidence="14">
    <location>
        <begin position="227"/>
        <end position="238"/>
    </location>
</feature>
<feature type="strand" evidence="14">
    <location>
        <begin position="245"/>
        <end position="247"/>
    </location>
</feature>
<feature type="strand" evidence="14">
    <location>
        <begin position="257"/>
        <end position="262"/>
    </location>
</feature>
<feature type="helix" evidence="14">
    <location>
        <begin position="268"/>
        <end position="277"/>
    </location>
</feature>
<feature type="helix" evidence="14">
    <location>
        <begin position="280"/>
        <end position="282"/>
    </location>
</feature>
<feature type="strand" evidence="14">
    <location>
        <begin position="283"/>
        <end position="288"/>
    </location>
</feature>
<feature type="helix" evidence="14">
    <location>
        <begin position="295"/>
        <end position="298"/>
    </location>
</feature>
<feature type="helix" evidence="14">
    <location>
        <begin position="300"/>
        <end position="311"/>
    </location>
</feature>
<evidence type="ECO:0000250" key="1"/>
<evidence type="ECO:0000250" key="2">
    <source>
        <dbReference type="UniProtKB" id="Q9UN36"/>
    </source>
</evidence>
<evidence type="ECO:0000256" key="3">
    <source>
        <dbReference type="SAM" id="MobiDB-lite"/>
    </source>
</evidence>
<evidence type="ECO:0000269" key="4">
    <source>
    </source>
</evidence>
<evidence type="ECO:0000269" key="5">
    <source>
    </source>
</evidence>
<evidence type="ECO:0000269" key="6">
    <source>
    </source>
</evidence>
<evidence type="ECO:0000269" key="7">
    <source>
    </source>
</evidence>
<evidence type="ECO:0000269" key="8">
    <source>
    </source>
</evidence>
<evidence type="ECO:0000303" key="9">
    <source>
    </source>
</evidence>
<evidence type="ECO:0000305" key="10"/>
<evidence type="ECO:0007744" key="11">
    <source>
    </source>
</evidence>
<evidence type="ECO:0007744" key="12">
    <source>
    </source>
</evidence>
<evidence type="ECO:0007744" key="13">
    <source>
    </source>
</evidence>
<evidence type="ECO:0007829" key="14">
    <source>
        <dbReference type="PDB" id="2QMQ"/>
    </source>
</evidence>
<organism>
    <name type="scientific">Mus musculus</name>
    <name type="common">Mouse</name>
    <dbReference type="NCBI Taxonomy" id="10090"/>
    <lineage>
        <taxon>Eukaryota</taxon>
        <taxon>Metazoa</taxon>
        <taxon>Chordata</taxon>
        <taxon>Craniata</taxon>
        <taxon>Vertebrata</taxon>
        <taxon>Euteleostomi</taxon>
        <taxon>Mammalia</taxon>
        <taxon>Eutheria</taxon>
        <taxon>Euarchontoglires</taxon>
        <taxon>Glires</taxon>
        <taxon>Rodentia</taxon>
        <taxon>Myomorpha</taxon>
        <taxon>Muroidea</taxon>
        <taxon>Muridae</taxon>
        <taxon>Murinae</taxon>
        <taxon>Mus</taxon>
        <taxon>Mus</taxon>
    </lineage>
</organism>
<accession>Q9QYG0</accession>
<accession>Q3TI48</accession>
<accession>Q3TY42</accession>
<accession>Q3U3T5</accession>
<accession>Q69ZN2</accession>
<accession>Q8C661</accession>
<protein>
    <recommendedName>
        <fullName>Protein NDRG2</fullName>
    </recommendedName>
    <alternativeName>
        <fullName>N-myc downstream-regulated gene 2 protein</fullName>
    </alternativeName>
    <alternativeName>
        <fullName>Protein Ndr2</fullName>
    </alternativeName>
</protein>
<comment type="function">
    <text evidence="1">Contributes to the regulation of the Wnt signaling pathway. Down-regulates CTNNB1-mediated transcriptional activation of target genes, such as CCND1, and may thereby act as tumor suppressor. May be involved in dendritic cell and neuron differentiation (By similarity).</text>
</comment>
<comment type="subunit">
    <text evidence="1">Interacts with CTNNB1.</text>
</comment>
<comment type="subcellular location">
    <subcellularLocation>
        <location evidence="4 7">Cytoplasm</location>
    </subcellularLocation>
    <subcellularLocation>
        <location evidence="1">Cytoplasm</location>
        <location evidence="1">Perinuclear region</location>
    </subcellularLocation>
    <subcellularLocation>
        <location evidence="1">Cell projection</location>
        <location evidence="1">Growth cone</location>
    </subcellularLocation>
    <text evidence="1">In neurons, seems to concentrate at axonal growth cone. Perinuclear in neurons (By similarity).</text>
</comment>
<comment type="alternative products">
    <event type="alternative splicing"/>
    <isoform>
        <id>Q9QYG0-1</id>
        <name>1</name>
        <sequence type="displayed"/>
    </isoform>
    <isoform>
        <id>Q9QYG0-2</id>
        <name>2</name>
        <sequence type="described" ref="VSP_019009"/>
    </isoform>
</comment>
<comment type="tissue specificity">
    <text evidence="6 7 8">Expressed at highest levels in brain, heart and liver, and at lower levels in kidney, colon, skeletal muscle, adrenal gland, ovary and uterus (at protein level).</text>
</comment>
<comment type="developmental stage">
    <text evidence="5 7">Expression is restricted to the developing heart at the stage of 9.5 dpc, and increases after 11.5 dpc as development of tissues and organs proceeds. Present in many developing tissues including heart, brain, lung, liver, gut, kidney, skeletal muscle, cartilage and epidermis (at protein level).</text>
</comment>
<comment type="similarity">
    <text evidence="10">Belongs to the NDRG family.</text>
</comment>
<sequence>MAELQEVQITEEKPLLPGQTPETAKEAELAARILLDQGQTHSVETPYGSVTFTVYGTPKPKRPAIFTYHDVGLNYKSCFQPLFRFGDMQEIIQNFVRVHVDAPGMEEGAPVFPLGYQYPSLDQLADMIPCILQYLNFSTIIGVGVGAGAYILSRYALNHPDTVEGLVLINIDPNAKGWMDWAAHKLTGLTSSIPDMILGHLFSQEELSGNSELIQKYRGIIQHAPNLENIELYWNSYNNRRDLNFERGGETTLKCPVMLVVGDQAPHEDAVVECNSKLDPTQTSFLKMADSGGQPQLTQPGKLTEAFKYFLQGMGYMASSCMTRLSRSRTASLTSAASIDGSRSRSRTLSQSSESGTLPSGPPGHTMEVSC</sequence>
<proteinExistence type="evidence at protein level"/>
<reference key="1">
    <citation type="journal article" date="1999" name="Biochem. Biophys. Res. Commun.">
        <title>Identification of new genes ndr2 and ndr3 which are related to Ndr1/RTP/Drg1 but show distinct tissue specificity and response to N-myc.</title>
        <authorList>
            <person name="Okuda T."/>
            <person name="Kondoh H."/>
        </authorList>
    </citation>
    <scope>NUCLEOTIDE SEQUENCE [MRNA] (ISOFORM 1)</scope>
    <source>
        <tissue>Embryo</tissue>
    </source>
</reference>
<reference key="2">
    <citation type="journal article" date="2005" name="Science">
        <title>The transcriptional landscape of the mammalian genome.</title>
        <authorList>
            <person name="Carninci P."/>
            <person name="Kasukawa T."/>
            <person name="Katayama S."/>
            <person name="Gough J."/>
            <person name="Frith M.C."/>
            <person name="Maeda N."/>
            <person name="Oyama R."/>
            <person name="Ravasi T."/>
            <person name="Lenhard B."/>
            <person name="Wells C."/>
            <person name="Kodzius R."/>
            <person name="Shimokawa K."/>
            <person name="Bajic V.B."/>
            <person name="Brenner S.E."/>
            <person name="Batalov S."/>
            <person name="Forrest A.R."/>
            <person name="Zavolan M."/>
            <person name="Davis M.J."/>
            <person name="Wilming L.G."/>
            <person name="Aidinis V."/>
            <person name="Allen J.E."/>
            <person name="Ambesi-Impiombato A."/>
            <person name="Apweiler R."/>
            <person name="Aturaliya R.N."/>
            <person name="Bailey T.L."/>
            <person name="Bansal M."/>
            <person name="Baxter L."/>
            <person name="Beisel K.W."/>
            <person name="Bersano T."/>
            <person name="Bono H."/>
            <person name="Chalk A.M."/>
            <person name="Chiu K.P."/>
            <person name="Choudhary V."/>
            <person name="Christoffels A."/>
            <person name="Clutterbuck D.R."/>
            <person name="Crowe M.L."/>
            <person name="Dalla E."/>
            <person name="Dalrymple B.P."/>
            <person name="de Bono B."/>
            <person name="Della Gatta G."/>
            <person name="di Bernardo D."/>
            <person name="Down T."/>
            <person name="Engstrom P."/>
            <person name="Fagiolini M."/>
            <person name="Faulkner G."/>
            <person name="Fletcher C.F."/>
            <person name="Fukushima T."/>
            <person name="Furuno M."/>
            <person name="Futaki S."/>
            <person name="Gariboldi M."/>
            <person name="Georgii-Hemming P."/>
            <person name="Gingeras T.R."/>
            <person name="Gojobori T."/>
            <person name="Green R.E."/>
            <person name="Gustincich S."/>
            <person name="Harbers M."/>
            <person name="Hayashi Y."/>
            <person name="Hensch T.K."/>
            <person name="Hirokawa N."/>
            <person name="Hill D."/>
            <person name="Huminiecki L."/>
            <person name="Iacono M."/>
            <person name="Ikeo K."/>
            <person name="Iwama A."/>
            <person name="Ishikawa T."/>
            <person name="Jakt M."/>
            <person name="Kanapin A."/>
            <person name="Katoh M."/>
            <person name="Kawasawa Y."/>
            <person name="Kelso J."/>
            <person name="Kitamura H."/>
            <person name="Kitano H."/>
            <person name="Kollias G."/>
            <person name="Krishnan S.P."/>
            <person name="Kruger A."/>
            <person name="Kummerfeld S.K."/>
            <person name="Kurochkin I.V."/>
            <person name="Lareau L.F."/>
            <person name="Lazarevic D."/>
            <person name="Lipovich L."/>
            <person name="Liu J."/>
            <person name="Liuni S."/>
            <person name="McWilliam S."/>
            <person name="Madan Babu M."/>
            <person name="Madera M."/>
            <person name="Marchionni L."/>
            <person name="Matsuda H."/>
            <person name="Matsuzawa S."/>
            <person name="Miki H."/>
            <person name="Mignone F."/>
            <person name="Miyake S."/>
            <person name="Morris K."/>
            <person name="Mottagui-Tabar S."/>
            <person name="Mulder N."/>
            <person name="Nakano N."/>
            <person name="Nakauchi H."/>
            <person name="Ng P."/>
            <person name="Nilsson R."/>
            <person name="Nishiguchi S."/>
            <person name="Nishikawa S."/>
            <person name="Nori F."/>
            <person name="Ohara O."/>
            <person name="Okazaki Y."/>
            <person name="Orlando V."/>
            <person name="Pang K.C."/>
            <person name="Pavan W.J."/>
            <person name="Pavesi G."/>
            <person name="Pesole G."/>
            <person name="Petrovsky N."/>
            <person name="Piazza S."/>
            <person name="Reed J."/>
            <person name="Reid J.F."/>
            <person name="Ring B.Z."/>
            <person name="Ringwald M."/>
            <person name="Rost B."/>
            <person name="Ruan Y."/>
            <person name="Salzberg S.L."/>
            <person name="Sandelin A."/>
            <person name="Schneider C."/>
            <person name="Schoenbach C."/>
            <person name="Sekiguchi K."/>
            <person name="Semple C.A."/>
            <person name="Seno S."/>
            <person name="Sessa L."/>
            <person name="Sheng Y."/>
            <person name="Shibata Y."/>
            <person name="Shimada H."/>
            <person name="Shimada K."/>
            <person name="Silva D."/>
            <person name="Sinclair B."/>
            <person name="Sperling S."/>
            <person name="Stupka E."/>
            <person name="Sugiura K."/>
            <person name="Sultana R."/>
            <person name="Takenaka Y."/>
            <person name="Taki K."/>
            <person name="Tammoja K."/>
            <person name="Tan S.L."/>
            <person name="Tang S."/>
            <person name="Taylor M.S."/>
            <person name="Tegner J."/>
            <person name="Teichmann S.A."/>
            <person name="Ueda H.R."/>
            <person name="van Nimwegen E."/>
            <person name="Verardo R."/>
            <person name="Wei C.L."/>
            <person name="Yagi K."/>
            <person name="Yamanishi H."/>
            <person name="Zabarovsky E."/>
            <person name="Zhu S."/>
            <person name="Zimmer A."/>
            <person name="Hide W."/>
            <person name="Bult C."/>
            <person name="Grimmond S.M."/>
            <person name="Teasdale R.D."/>
            <person name="Liu E.T."/>
            <person name="Brusic V."/>
            <person name="Quackenbush J."/>
            <person name="Wahlestedt C."/>
            <person name="Mattick J.S."/>
            <person name="Hume D.A."/>
            <person name="Kai C."/>
            <person name="Sasaki D."/>
            <person name="Tomaru Y."/>
            <person name="Fukuda S."/>
            <person name="Kanamori-Katayama M."/>
            <person name="Suzuki M."/>
            <person name="Aoki J."/>
            <person name="Arakawa T."/>
            <person name="Iida J."/>
            <person name="Imamura K."/>
            <person name="Itoh M."/>
            <person name="Kato T."/>
            <person name="Kawaji H."/>
            <person name="Kawagashira N."/>
            <person name="Kawashima T."/>
            <person name="Kojima M."/>
            <person name="Kondo S."/>
            <person name="Konno H."/>
            <person name="Nakano K."/>
            <person name="Ninomiya N."/>
            <person name="Nishio T."/>
            <person name="Okada M."/>
            <person name="Plessy C."/>
            <person name="Shibata K."/>
            <person name="Shiraki T."/>
            <person name="Suzuki S."/>
            <person name="Tagami M."/>
            <person name="Waki K."/>
            <person name="Watahiki A."/>
            <person name="Okamura-Oho Y."/>
            <person name="Suzuki H."/>
            <person name="Kawai J."/>
            <person name="Hayashizaki Y."/>
        </authorList>
    </citation>
    <scope>NUCLEOTIDE SEQUENCE [LARGE SCALE MRNA] (ISOFORMS 1 AND 2)</scope>
    <source>
        <strain>C57BL/6J</strain>
        <strain>DBA/2J</strain>
        <strain>NOD</strain>
        <tissue>Head</tissue>
        <tissue>Visual cortex</tissue>
    </source>
</reference>
<reference key="3">
    <citation type="journal article" date="2004" name="Genome Res.">
        <title>The status, quality, and expansion of the NIH full-length cDNA project: the Mammalian Gene Collection (MGC).</title>
        <authorList>
            <consortium name="The MGC Project Team"/>
        </authorList>
    </citation>
    <scope>NUCLEOTIDE SEQUENCE [LARGE SCALE MRNA] (ISOFORM 1)</scope>
    <source>
        <strain>FVB/N</strain>
        <tissue>Liver</tissue>
    </source>
</reference>
<reference key="4">
    <citation type="submission" date="2007-04" db="UniProtKB">
        <authorList>
            <person name="Lubec G."/>
            <person name="Kang S.U."/>
        </authorList>
    </citation>
    <scope>PROTEIN SEQUENCE OF 62-84; 155-176 AND 278-287</scope>
    <scope>IDENTIFICATION BY MASS SPECTROMETRY</scope>
    <source>
        <strain>C57BL/6J</strain>
        <tissue>Brain</tissue>
    </source>
</reference>
<reference key="5">
    <citation type="journal article" date="2004" name="DNA Res.">
        <title>Prediction of the coding sequences of mouse homologues of KIAA gene: IV. The complete nucleotide sequences of 500 mouse KIAA-homologous cDNAs identified by screening of terminal sequences of cDNA clones randomly sampled from size-fractionated libraries.</title>
        <authorList>
            <person name="Okazaki N."/>
            <person name="Kikuno R."/>
            <person name="Ohara R."/>
            <person name="Inamoto S."/>
            <person name="Koseki H."/>
            <person name="Hiraoka S."/>
            <person name="Saga Y."/>
            <person name="Seino S."/>
            <person name="Nishimura M."/>
            <person name="Kaisho T."/>
            <person name="Hoshino K."/>
            <person name="Kitamura H."/>
            <person name="Nagase T."/>
            <person name="Ohara O."/>
            <person name="Koga H."/>
        </authorList>
    </citation>
    <scope>NUCLEOTIDE SEQUENCE [LARGE SCALE MRNA] OF 64-371</scope>
    <source>
        <tissue>Thymus</tissue>
    </source>
</reference>
<reference key="6">
    <citation type="journal article" date="2004" name="Biochem. J.">
        <title>Exploitation of KESTREL to identify NDRG family members as physiological substrates for SGK1 and GSK3.</title>
        <authorList>
            <person name="Murray J.T."/>
            <person name="Campbell D.G."/>
            <person name="Morrice N."/>
            <person name="Auld G.C."/>
            <person name="Shpiro N."/>
            <person name="Marquez R."/>
            <person name="Peggie M."/>
            <person name="Bain J."/>
            <person name="Bloomberg G.B."/>
            <person name="Grahammer F."/>
            <person name="Lang F."/>
            <person name="Wulff P."/>
            <person name="Kuhl D."/>
            <person name="Cohen P."/>
        </authorList>
    </citation>
    <scope>PHOSPHORYLATION AT THR-330; SER-332; THR-348 AND SER-350</scope>
    <scope>TISSUE SPECIFICITY</scope>
</reference>
<reference key="7">
    <citation type="journal article" date="2004" name="J. Biol. Chem.">
        <title>Akt mediates insulin-stimulated phosphorylation of Ndrg2: evidence for cross-talk with protein kinase C theta.</title>
        <authorList>
            <person name="Burchfield J.G."/>
            <person name="Lennard A.J."/>
            <person name="Narasimhan S."/>
            <person name="Hughes W.E."/>
            <person name="Wasinger V.C."/>
            <person name="Corthals G.L."/>
            <person name="Okuda T."/>
            <person name="Kondoh H."/>
            <person name="Biden T.J."/>
            <person name="Schmitz-Peiffer C."/>
        </authorList>
    </citation>
    <scope>PHOSPHORYLATION AT SER-332 AND THR-348</scope>
    <scope>SUBCELLULAR LOCATION</scope>
</reference>
<reference key="8">
    <citation type="journal article" date="2004" name="Neurobiol. Dis.">
        <title>NDRG2: a novel Alzheimer's disease associated protein.</title>
        <authorList>
            <person name="Mitchelmore C."/>
            <person name="Buechmann-Moller S."/>
            <person name="Rask L."/>
            <person name="West M.J."/>
            <person name="Troncoso J.C."/>
            <person name="Jensen N.A."/>
        </authorList>
    </citation>
    <scope>DEVELOPMENTAL STAGE</scope>
</reference>
<reference key="9">
    <citation type="journal article" date="2006" name="Cell Tissue Res.">
        <title>Expression analysis of the NDRG2 gene in mouse embryonic and adult tissues.</title>
        <authorList>
            <person name="Hu X.-L."/>
            <person name="Liu X.-P."/>
            <person name="Deng Y.-C."/>
            <person name="Lin S.-X."/>
            <person name="Wu L."/>
            <person name="Zhang J."/>
            <person name="Wang L.-F."/>
            <person name="Wang X.-B."/>
            <person name="Li X."/>
            <person name="Shen L."/>
            <person name="Zhang Y.-Q."/>
            <person name="Yao L.-B."/>
        </authorList>
    </citation>
    <scope>SUBCELLULAR LOCATION</scope>
    <scope>DEVELOPMENTAL STAGE</scope>
    <scope>TISSUE SPECIFICITY</scope>
</reference>
<reference key="10">
    <citation type="journal article" date="2007" name="Proc. Natl. Acad. Sci. U.S.A.">
        <title>Large-scale phosphorylation analysis of mouse liver.</title>
        <authorList>
            <person name="Villen J."/>
            <person name="Beausoleil S.A."/>
            <person name="Gerber S.A."/>
            <person name="Gygi S.P."/>
        </authorList>
    </citation>
    <scope>PHOSPHORYLATION [LARGE SCALE ANALYSIS] AT SER-328; THR-330; SER-332; THR-334; SER-335; SER-338 AND THR-357</scope>
    <scope>IDENTIFICATION BY MASS SPECTROMETRY [LARGE SCALE ANALYSIS]</scope>
    <source>
        <tissue>Liver</tissue>
    </source>
</reference>
<reference key="11">
    <citation type="journal article" date="2008" name="J. Proteome Res.">
        <title>Specific phosphopeptide enrichment with immobilized titanium ion affinity chromatography adsorbent for phosphoproteome analysis.</title>
        <authorList>
            <person name="Zhou H."/>
            <person name="Ye M."/>
            <person name="Dong J."/>
            <person name="Han G."/>
            <person name="Jiang X."/>
            <person name="Wu R."/>
            <person name="Zou H."/>
        </authorList>
    </citation>
    <scope>PHOSPHORYLATION [LARGE SCALE ANALYSIS] AT SER-326; SER-328; THR-330 AND SER-332</scope>
    <scope>IDENTIFICATION BY MASS SPECTROMETRY [LARGE SCALE ANALYSIS]</scope>
    <source>
        <tissue>Liver</tissue>
    </source>
</reference>
<reference key="12">
    <citation type="journal article" date="2010" name="Cell">
        <title>A tissue-specific atlas of mouse protein phosphorylation and expression.</title>
        <authorList>
            <person name="Huttlin E.L."/>
            <person name="Jedrychowski M.P."/>
            <person name="Elias J.E."/>
            <person name="Goswami T."/>
            <person name="Rad R."/>
            <person name="Beausoleil S.A."/>
            <person name="Villen J."/>
            <person name="Haas W."/>
            <person name="Sowa M.E."/>
            <person name="Gygi S.P."/>
        </authorList>
    </citation>
    <scope>PHOSPHORYLATION [LARGE SCALE ANALYSIS] AT SER-328; THR-330; SER-332; THR-334; SER-335; SER-338; SER-344; THR-348; SER-350; SER-352; SER-353; SER-355 AND SER-370</scope>
    <scope>IDENTIFICATION BY MASS SPECTROMETRY [LARGE SCALE ANALYSIS]</scope>
    <source>
        <tissue>Brain</tissue>
        <tissue>Brown adipose tissue</tissue>
        <tissue>Heart</tissue>
        <tissue>Kidney</tissue>
        <tissue>Liver</tissue>
        <tissue>Lung</tissue>
        <tissue>Pancreas</tissue>
        <tissue>Spleen</tissue>
        <tissue>Testis</tissue>
    </source>
</reference>
<reference key="13">
    <citation type="journal article" date="2011" name="J. Biol. Chem.">
        <title>NDRG4 protein-deficient mice exhibit spatial learning deficits and vulnerabilities to cerebral ischemia.</title>
        <authorList>
            <person name="Yamamoto H."/>
            <person name="Kokame K."/>
            <person name="Okuda T."/>
            <person name="Nakajo Y."/>
            <person name="Yanamoto H."/>
            <person name="Miyata T."/>
        </authorList>
    </citation>
    <scope>TISSUE SPECIFICITY</scope>
</reference>
<reference key="14">
    <citation type="journal article" date="2011" name="J. Biol. Chem.">
        <title>Crystal structure of the human N-Myc downstream-regulated gene 2 protein provides insight into its role as a tumor suppressor.</title>
        <authorList>
            <person name="Hwang J."/>
            <person name="Kim Y."/>
            <person name="Kang H.B."/>
            <person name="Jaroszewski L."/>
            <person name="Deacon A.M."/>
            <person name="Lee H."/>
            <person name="Choi W.C."/>
            <person name="Kim K.J."/>
            <person name="Kim C.H."/>
            <person name="Kang B.S."/>
            <person name="Lee J.O."/>
            <person name="Oh T.K."/>
            <person name="Kim J.W."/>
            <person name="Wilson I.A."/>
            <person name="Kim M.H."/>
        </authorList>
    </citation>
    <scope>X-RAY CRYSTALLOGRAPHY (1.7 ANGSTROMS) OF 40-313</scope>
</reference>
<name>NDRG2_MOUSE</name>
<dbReference type="EMBL" id="AB033921">
    <property type="protein sequence ID" value="BAA85882.1"/>
    <property type="molecule type" value="mRNA"/>
</dbReference>
<dbReference type="EMBL" id="AK076514">
    <property type="protein sequence ID" value="BAC36373.1"/>
    <property type="molecule type" value="mRNA"/>
</dbReference>
<dbReference type="EMBL" id="AK154597">
    <property type="protein sequence ID" value="BAE32700.1"/>
    <property type="molecule type" value="mRNA"/>
</dbReference>
<dbReference type="EMBL" id="AK158900">
    <property type="protein sequence ID" value="BAE34721.1"/>
    <property type="molecule type" value="mRNA"/>
</dbReference>
<dbReference type="EMBL" id="AK168011">
    <property type="protein sequence ID" value="BAE39998.1"/>
    <property type="molecule type" value="mRNA"/>
</dbReference>
<dbReference type="EMBL" id="BC012963">
    <property type="protein sequence ID" value="AAH12963.1"/>
    <property type="molecule type" value="mRNA"/>
</dbReference>
<dbReference type="EMBL" id="AK173136">
    <property type="protein sequence ID" value="BAD32414.1"/>
    <property type="molecule type" value="mRNA"/>
</dbReference>
<dbReference type="CCDS" id="CCDS27047.1">
    <molecule id="Q9QYG0-1"/>
</dbReference>
<dbReference type="CCDS" id="CCDS49486.1">
    <molecule id="Q9QYG0-2"/>
</dbReference>
<dbReference type="RefSeq" id="NP_001139431.1">
    <molecule id="Q9QYG0-2"/>
    <property type="nucleotide sequence ID" value="NM_001145959.2"/>
</dbReference>
<dbReference type="RefSeq" id="NP_001347194.1">
    <molecule id="Q9QYG0-1"/>
    <property type="nucleotide sequence ID" value="NM_001360265.2"/>
</dbReference>
<dbReference type="RefSeq" id="NP_001347195.1">
    <molecule id="Q9QYG0-1"/>
    <property type="nucleotide sequence ID" value="NM_001360266.2"/>
</dbReference>
<dbReference type="RefSeq" id="NP_001347196.1">
    <molecule id="Q9QYG0-1"/>
    <property type="nucleotide sequence ID" value="NM_001360267.2"/>
</dbReference>
<dbReference type="RefSeq" id="NP_001347197.1">
    <molecule id="Q9QYG0-1"/>
    <property type="nucleotide sequence ID" value="NM_001360268.2"/>
</dbReference>
<dbReference type="RefSeq" id="NP_001347198.1">
    <molecule id="Q9QYG0-1"/>
    <property type="nucleotide sequence ID" value="NM_001360269.2"/>
</dbReference>
<dbReference type="RefSeq" id="NP_001347200.1">
    <molecule id="Q9QYG0-2"/>
    <property type="nucleotide sequence ID" value="NM_001360271.2"/>
</dbReference>
<dbReference type="RefSeq" id="NP_001347201.1">
    <molecule id="Q9QYG0-2"/>
    <property type="nucleotide sequence ID" value="NM_001360272.2"/>
</dbReference>
<dbReference type="RefSeq" id="NP_001347202.1">
    <molecule id="Q9QYG0-2"/>
    <property type="nucleotide sequence ID" value="NM_001360273.2"/>
</dbReference>
<dbReference type="RefSeq" id="NP_001347203.1">
    <molecule id="Q9QYG0-2"/>
    <property type="nucleotide sequence ID" value="NM_001360274.2"/>
</dbReference>
<dbReference type="RefSeq" id="NP_001347205.1">
    <molecule id="Q9QYG0-2"/>
    <property type="nucleotide sequence ID" value="NM_001360276.2"/>
</dbReference>
<dbReference type="RefSeq" id="NP_001411620.1">
    <molecule id="Q9QYG0-2"/>
    <property type="nucleotide sequence ID" value="NM_001424691.1"/>
</dbReference>
<dbReference type="RefSeq" id="NP_001411621.1">
    <molecule id="Q9QYG0-2"/>
    <property type="nucleotide sequence ID" value="NM_001424692.1"/>
</dbReference>
<dbReference type="RefSeq" id="NP_001411622.1">
    <molecule id="Q9QYG0-2"/>
    <property type="nucleotide sequence ID" value="NM_001424693.1"/>
</dbReference>
<dbReference type="RefSeq" id="NP_001411623.1">
    <molecule id="Q9QYG0-2"/>
    <property type="nucleotide sequence ID" value="NM_001424694.1"/>
</dbReference>
<dbReference type="RefSeq" id="NP_001411624.1">
    <molecule id="Q9QYG0-1"/>
    <property type="nucleotide sequence ID" value="NM_001424695.1"/>
</dbReference>
<dbReference type="RefSeq" id="NP_001411625.1">
    <molecule id="Q9QYG0-1"/>
    <property type="nucleotide sequence ID" value="NM_001424696.1"/>
</dbReference>
<dbReference type="RefSeq" id="NP_001411626.1">
    <molecule id="Q9QYG0-1"/>
    <property type="nucleotide sequence ID" value="NM_001424697.1"/>
</dbReference>
<dbReference type="RefSeq" id="NP_038892.1">
    <molecule id="Q9QYG0-1"/>
    <property type="nucleotide sequence ID" value="NM_013864.3"/>
</dbReference>
<dbReference type="RefSeq" id="XP_006519161.2">
    <property type="nucleotide sequence ID" value="XM_006519098.3"/>
</dbReference>
<dbReference type="RefSeq" id="XP_006519162.2">
    <property type="nucleotide sequence ID" value="XM_006519099.3"/>
</dbReference>
<dbReference type="RefSeq" id="XP_006519166.1">
    <property type="nucleotide sequence ID" value="XM_006519103.1"/>
</dbReference>
<dbReference type="RefSeq" id="XP_006519167.1">
    <property type="nucleotide sequence ID" value="XM_006519104.3"/>
</dbReference>
<dbReference type="RefSeq" id="XP_006519168.1">
    <property type="nucleotide sequence ID" value="XM_006519105.2"/>
</dbReference>
<dbReference type="RefSeq" id="XP_017171534.1">
    <property type="nucleotide sequence ID" value="XM_017316045.1"/>
</dbReference>
<dbReference type="RefSeq" id="XP_017171535.1">
    <property type="nucleotide sequence ID" value="XM_017316046.1"/>
</dbReference>
<dbReference type="RefSeq" id="XP_017171536.1">
    <property type="nucleotide sequence ID" value="XM_017316047.1"/>
</dbReference>
<dbReference type="RefSeq" id="XP_017171538.1">
    <property type="nucleotide sequence ID" value="XM_017316049.1"/>
</dbReference>
<dbReference type="RefSeq" id="XP_017171539.1">
    <property type="nucleotide sequence ID" value="XM_017316050.1"/>
</dbReference>
<dbReference type="RefSeq" id="XP_017171540.1">
    <property type="nucleotide sequence ID" value="XM_017316051.1"/>
</dbReference>
<dbReference type="RefSeq" id="XP_036014553.1">
    <molecule id="Q9QYG0-1"/>
    <property type="nucleotide sequence ID" value="XM_036158660.1"/>
</dbReference>
<dbReference type="RefSeq" id="XP_036014555.1">
    <molecule id="Q9QYG0-2"/>
    <property type="nucleotide sequence ID" value="XM_036158662.1"/>
</dbReference>
<dbReference type="PDB" id="2QMQ">
    <property type="method" value="X-ray"/>
    <property type="resolution" value="1.70 A"/>
    <property type="chains" value="A=40-313"/>
</dbReference>
<dbReference type="PDBsum" id="2QMQ"/>
<dbReference type="SMR" id="Q9QYG0"/>
<dbReference type="BioGRID" id="205892">
    <property type="interactions" value="10"/>
</dbReference>
<dbReference type="FunCoup" id="Q9QYG0">
    <property type="interactions" value="2239"/>
</dbReference>
<dbReference type="IntAct" id="Q9QYG0">
    <property type="interactions" value="2"/>
</dbReference>
<dbReference type="STRING" id="10090.ENSMUSP00000004673"/>
<dbReference type="ESTHER" id="mouse-ndr2">
    <property type="family name" value="Ndr_family"/>
</dbReference>
<dbReference type="GlyGen" id="Q9QYG0">
    <property type="glycosylation" value="1 site, 1 O-linked glycan (1 site)"/>
</dbReference>
<dbReference type="iPTMnet" id="Q9QYG0"/>
<dbReference type="MetOSite" id="Q9QYG0"/>
<dbReference type="PhosphoSitePlus" id="Q9QYG0"/>
<dbReference type="SwissPalm" id="Q9QYG0"/>
<dbReference type="jPOST" id="Q9QYG0"/>
<dbReference type="PaxDb" id="10090-ENSMUSP00000004673"/>
<dbReference type="PeptideAtlas" id="Q9QYG0"/>
<dbReference type="ProteomicsDB" id="286161">
    <molecule id="Q9QYG0-1"/>
</dbReference>
<dbReference type="ProteomicsDB" id="286162">
    <molecule id="Q9QYG0-2"/>
</dbReference>
<dbReference type="Antibodypedia" id="142">
    <property type="antibodies" value="382 antibodies from 37 providers"/>
</dbReference>
<dbReference type="DNASU" id="29811"/>
<dbReference type="Ensembl" id="ENSMUST00000004673.15">
    <molecule id="Q9QYG0-1"/>
    <property type="protein sequence ID" value="ENSMUSP00000004673.8"/>
    <property type="gene ID" value="ENSMUSG00000004558.16"/>
</dbReference>
<dbReference type="Ensembl" id="ENSMUST00000111632.5">
    <molecule id="Q9QYG0-2"/>
    <property type="protein sequence ID" value="ENSMUSP00000107259.4"/>
    <property type="gene ID" value="ENSMUSG00000004558.16"/>
</dbReference>
<dbReference type="GeneID" id="29811"/>
<dbReference type="KEGG" id="mmu:29811"/>
<dbReference type="UCSC" id="uc007tnk.2">
    <molecule id="Q9QYG0-1"/>
    <property type="organism name" value="mouse"/>
</dbReference>
<dbReference type="UCSC" id="uc007tnl.2">
    <molecule id="Q9QYG0-2"/>
    <property type="organism name" value="mouse"/>
</dbReference>
<dbReference type="AGR" id="MGI:1352498"/>
<dbReference type="CTD" id="57447"/>
<dbReference type="MGI" id="MGI:1352498">
    <property type="gene designation" value="Ndrg2"/>
</dbReference>
<dbReference type="VEuPathDB" id="HostDB:ENSMUSG00000004558"/>
<dbReference type="eggNOG" id="KOG2931">
    <property type="taxonomic scope" value="Eukaryota"/>
</dbReference>
<dbReference type="GeneTree" id="ENSGT00950000182872"/>
<dbReference type="HOGENOM" id="CLU_035361_1_0_1"/>
<dbReference type="InParanoid" id="Q9QYG0"/>
<dbReference type="OMA" id="KTCFQPL"/>
<dbReference type="OrthoDB" id="741027at2759"/>
<dbReference type="PhylomeDB" id="Q9QYG0"/>
<dbReference type="TreeFam" id="TF313168"/>
<dbReference type="BioGRID-ORCS" id="29811">
    <property type="hits" value="4 hits in 78 CRISPR screens"/>
</dbReference>
<dbReference type="ChiTaRS" id="Ndrg2">
    <property type="organism name" value="mouse"/>
</dbReference>
<dbReference type="EvolutionaryTrace" id="Q9QYG0"/>
<dbReference type="PRO" id="PR:Q9QYG0"/>
<dbReference type="Proteomes" id="UP000000589">
    <property type="component" value="Chromosome 14"/>
</dbReference>
<dbReference type="RNAct" id="Q9QYG0">
    <property type="molecule type" value="protein"/>
</dbReference>
<dbReference type="Bgee" id="ENSMUSG00000004558">
    <property type="expression patterns" value="Expressed in hindlimb stylopod muscle and 310 other cell types or tissues"/>
</dbReference>
<dbReference type="ExpressionAtlas" id="Q9QYG0">
    <property type="expression patterns" value="baseline and differential"/>
</dbReference>
<dbReference type="GO" id="GO:0005737">
    <property type="term" value="C:cytoplasm"/>
    <property type="evidence" value="ECO:0000314"/>
    <property type="project" value="MGI"/>
</dbReference>
<dbReference type="GO" id="GO:0005794">
    <property type="term" value="C:Golgi apparatus"/>
    <property type="evidence" value="ECO:0007669"/>
    <property type="project" value="Ensembl"/>
</dbReference>
<dbReference type="GO" id="GO:0030426">
    <property type="term" value="C:growth cone"/>
    <property type="evidence" value="ECO:0007669"/>
    <property type="project" value="UniProtKB-SubCell"/>
</dbReference>
<dbReference type="GO" id="GO:0005634">
    <property type="term" value="C:nucleus"/>
    <property type="evidence" value="ECO:0000314"/>
    <property type="project" value="MGI"/>
</dbReference>
<dbReference type="GO" id="GO:0048471">
    <property type="term" value="C:perinuclear region of cytoplasm"/>
    <property type="evidence" value="ECO:0007669"/>
    <property type="project" value="UniProtKB-SubCell"/>
</dbReference>
<dbReference type="GO" id="GO:0030154">
    <property type="term" value="P:cell differentiation"/>
    <property type="evidence" value="ECO:0007669"/>
    <property type="project" value="UniProtKB-KW"/>
</dbReference>
<dbReference type="GO" id="GO:0001818">
    <property type="term" value="P:negative regulation of cytokine production"/>
    <property type="evidence" value="ECO:0000315"/>
    <property type="project" value="MGI"/>
</dbReference>
<dbReference type="GO" id="GO:0070373">
    <property type="term" value="P:negative regulation of ERK1 and ERK2 cascade"/>
    <property type="evidence" value="ECO:0000315"/>
    <property type="project" value="MGI"/>
</dbReference>
<dbReference type="GO" id="GO:1904706">
    <property type="term" value="P:negative regulation of vascular associated smooth muscle cell proliferation"/>
    <property type="evidence" value="ECO:0000314"/>
    <property type="project" value="MGI"/>
</dbReference>
<dbReference type="GO" id="GO:0007399">
    <property type="term" value="P:nervous system development"/>
    <property type="evidence" value="ECO:0007669"/>
    <property type="project" value="UniProtKB-KW"/>
</dbReference>
<dbReference type="GO" id="GO:0090361">
    <property type="term" value="P:regulation of platelet-derived growth factor production"/>
    <property type="evidence" value="ECO:0000315"/>
    <property type="project" value="MGI"/>
</dbReference>
<dbReference type="GO" id="GO:0010574">
    <property type="term" value="P:regulation of vascular endothelial growth factor production"/>
    <property type="evidence" value="ECO:0000315"/>
    <property type="project" value="MGI"/>
</dbReference>
<dbReference type="GO" id="GO:1990874">
    <property type="term" value="P:vascular associated smooth muscle cell proliferation"/>
    <property type="evidence" value="ECO:0000314"/>
    <property type="project" value="MGI"/>
</dbReference>
<dbReference type="GO" id="GO:0016055">
    <property type="term" value="P:Wnt signaling pathway"/>
    <property type="evidence" value="ECO:0007669"/>
    <property type="project" value="UniProtKB-KW"/>
</dbReference>
<dbReference type="FunFam" id="3.40.50.1820:FF:000034">
    <property type="entry name" value="NDRG2 isoform 1"/>
    <property type="match status" value="1"/>
</dbReference>
<dbReference type="Gene3D" id="3.40.50.1820">
    <property type="entry name" value="alpha/beta hydrolase"/>
    <property type="match status" value="1"/>
</dbReference>
<dbReference type="InterPro" id="IPR029058">
    <property type="entry name" value="AB_hydrolase_fold"/>
</dbReference>
<dbReference type="InterPro" id="IPR004142">
    <property type="entry name" value="NDRG"/>
</dbReference>
<dbReference type="PANTHER" id="PTHR11034">
    <property type="entry name" value="N-MYC DOWNSTREAM REGULATED"/>
    <property type="match status" value="1"/>
</dbReference>
<dbReference type="Pfam" id="PF03096">
    <property type="entry name" value="Ndr"/>
    <property type="match status" value="1"/>
</dbReference>
<dbReference type="SUPFAM" id="SSF53474">
    <property type="entry name" value="alpha/beta-Hydrolases"/>
    <property type="match status" value="1"/>
</dbReference>
<keyword id="KW-0002">3D-structure</keyword>
<keyword id="KW-0007">Acetylation</keyword>
<keyword id="KW-0025">Alternative splicing</keyword>
<keyword id="KW-0966">Cell projection</keyword>
<keyword id="KW-0963">Cytoplasm</keyword>
<keyword id="KW-0217">Developmental protein</keyword>
<keyword id="KW-0221">Differentiation</keyword>
<keyword id="KW-0903">Direct protein sequencing</keyword>
<keyword id="KW-0524">Neurogenesis</keyword>
<keyword id="KW-0597">Phosphoprotein</keyword>
<keyword id="KW-1185">Reference proteome</keyword>
<keyword id="KW-0043">Tumor suppressor</keyword>
<keyword id="KW-0879">Wnt signaling pathway</keyword>
<gene>
    <name type="primary">Ndrg2</name>
    <name type="synonym">Kiaa1248</name>
    <name type="synonym">Ndr2</name>
</gene>